<name>VATA_STRPZ</name>
<protein>
    <recommendedName>
        <fullName evidence="1">V-type ATP synthase alpha chain</fullName>
        <ecNumber evidence="1">7.1.2.2</ecNumber>
    </recommendedName>
    <alternativeName>
        <fullName evidence="1">V-ATPase subunit A</fullName>
    </alternativeName>
</protein>
<keyword id="KW-0066">ATP synthesis</keyword>
<keyword id="KW-0067">ATP-binding</keyword>
<keyword id="KW-0375">Hydrogen ion transport</keyword>
<keyword id="KW-0406">Ion transport</keyword>
<keyword id="KW-0547">Nucleotide-binding</keyword>
<keyword id="KW-1278">Translocase</keyword>
<keyword id="KW-0813">Transport</keyword>
<evidence type="ECO:0000255" key="1">
    <source>
        <dbReference type="HAMAP-Rule" id="MF_00309"/>
    </source>
</evidence>
<sequence length="591" mass="64947">MNQGKIITVSGPLVVASGMQEANIQDICRVGHLGLVGEIIEMRRDQASIQVYEETSGIGPGEPVVTTGCPLSVELGPGLISEMFDGIQRPLDRFQKATDSDFLIRGVAIPSLDRKAKWAFIPKLSVGQEVVAGDILGTVQETAVIEHRVMVPYKVSGTLVAIHAGDFTVTDTVYEIKQEDGSIYQGSLMQTWPVRQSRPVAQKLIPVEPLVTGQRVIDTFFPVTKGGAAAVPGPFGAGKTVVQHQIAKFANVDIVIYVGCGERGNEMTDVLNEFPELIDPNTGQSIMERTVLIANTSNMPVAAREASIYTGITIAEYFRDMGYSVAIMADSTSRWAEALREMSGRLQEIPGDEGYPAYLGSRIAEYYERAGRVRTLGSQEREGTITAIGAVSPPGGDISEPVTQNTLRIVKVFWGLDAPLAQRRHFPAINWLTSYSLYQDDVGSYIDRKQQSNWSNKVTRAMAILQREASLEEIVRLVGLDSLSEQDRLIMAVARQIREDYLQQNAFDSVDTFTSFPKQEAMLTNILTFNEEASKALSLGAYFNEIMEGTAQVRDRIARSKFIPEENLEQIKGLTQKVTKEIHHVLAKGGI</sequence>
<proteinExistence type="inferred from homology"/>
<feature type="chain" id="PRO_1000115645" description="V-type ATP synthase alpha chain">
    <location>
        <begin position="1"/>
        <end position="591"/>
    </location>
</feature>
<feature type="binding site" evidence="1">
    <location>
        <begin position="233"/>
        <end position="240"/>
    </location>
    <ligand>
        <name>ATP</name>
        <dbReference type="ChEBI" id="CHEBI:30616"/>
    </ligand>
</feature>
<dbReference type="EC" id="7.1.2.2" evidence="1"/>
<dbReference type="EMBL" id="CP000829">
    <property type="protein sequence ID" value="ACI60485.1"/>
    <property type="molecule type" value="Genomic_DNA"/>
</dbReference>
<dbReference type="SMR" id="B5XJH3"/>
<dbReference type="KEGG" id="soz:Spy49_0135"/>
<dbReference type="HOGENOM" id="CLU_008162_3_1_9"/>
<dbReference type="Proteomes" id="UP000001039">
    <property type="component" value="Chromosome"/>
</dbReference>
<dbReference type="GO" id="GO:0045259">
    <property type="term" value="C:proton-transporting ATP synthase complex"/>
    <property type="evidence" value="ECO:0007669"/>
    <property type="project" value="UniProtKB-ARBA"/>
</dbReference>
<dbReference type="GO" id="GO:0005524">
    <property type="term" value="F:ATP binding"/>
    <property type="evidence" value="ECO:0007669"/>
    <property type="project" value="UniProtKB-UniRule"/>
</dbReference>
<dbReference type="GO" id="GO:0046933">
    <property type="term" value="F:proton-transporting ATP synthase activity, rotational mechanism"/>
    <property type="evidence" value="ECO:0007669"/>
    <property type="project" value="UniProtKB-UniRule"/>
</dbReference>
<dbReference type="GO" id="GO:0046961">
    <property type="term" value="F:proton-transporting ATPase activity, rotational mechanism"/>
    <property type="evidence" value="ECO:0007669"/>
    <property type="project" value="InterPro"/>
</dbReference>
<dbReference type="GO" id="GO:0042777">
    <property type="term" value="P:proton motive force-driven plasma membrane ATP synthesis"/>
    <property type="evidence" value="ECO:0007669"/>
    <property type="project" value="UniProtKB-UniRule"/>
</dbReference>
<dbReference type="CDD" id="cd18111">
    <property type="entry name" value="ATP-synt_V_A-type_alpha_C"/>
    <property type="match status" value="1"/>
</dbReference>
<dbReference type="CDD" id="cd18119">
    <property type="entry name" value="ATP-synt_V_A-type_alpha_N"/>
    <property type="match status" value="1"/>
</dbReference>
<dbReference type="CDD" id="cd01134">
    <property type="entry name" value="V_A-ATPase_A"/>
    <property type="match status" value="1"/>
</dbReference>
<dbReference type="FunFam" id="3.40.50.300:FF:000675">
    <property type="entry name" value="V-type ATP synthase alpha chain"/>
    <property type="match status" value="1"/>
</dbReference>
<dbReference type="FunFam" id="2.40.30.20:FF:000002">
    <property type="entry name" value="V-type proton ATPase catalytic subunit A"/>
    <property type="match status" value="1"/>
</dbReference>
<dbReference type="FunFam" id="2.40.50.100:FF:000008">
    <property type="entry name" value="V-type proton ATPase catalytic subunit A"/>
    <property type="match status" value="1"/>
</dbReference>
<dbReference type="Gene3D" id="2.40.30.20">
    <property type="match status" value="1"/>
</dbReference>
<dbReference type="Gene3D" id="2.40.50.100">
    <property type="match status" value="1"/>
</dbReference>
<dbReference type="Gene3D" id="1.10.1140.10">
    <property type="entry name" value="Bovine Mitochondrial F1-atpase, Atp Synthase Beta Chain, Chain D, domain 3"/>
    <property type="match status" value="1"/>
</dbReference>
<dbReference type="Gene3D" id="3.40.50.300">
    <property type="entry name" value="P-loop containing nucleotide triphosphate hydrolases"/>
    <property type="match status" value="1"/>
</dbReference>
<dbReference type="HAMAP" id="MF_00309">
    <property type="entry name" value="ATP_synth_A_arch"/>
    <property type="match status" value="1"/>
</dbReference>
<dbReference type="InterPro" id="IPR055190">
    <property type="entry name" value="ATP-synt_VA_C"/>
</dbReference>
<dbReference type="InterPro" id="IPR031686">
    <property type="entry name" value="ATP-synth_a_Xtn"/>
</dbReference>
<dbReference type="InterPro" id="IPR023366">
    <property type="entry name" value="ATP_synth_asu-like_sf"/>
</dbReference>
<dbReference type="InterPro" id="IPR020003">
    <property type="entry name" value="ATPase_a/bsu_AS"/>
</dbReference>
<dbReference type="InterPro" id="IPR004100">
    <property type="entry name" value="ATPase_F1/V1/A1_a/bsu_N"/>
</dbReference>
<dbReference type="InterPro" id="IPR036121">
    <property type="entry name" value="ATPase_F1/V1/A1_a/bsu_N_sf"/>
</dbReference>
<dbReference type="InterPro" id="IPR000194">
    <property type="entry name" value="ATPase_F1/V1/A1_a/bsu_nucl-bd"/>
</dbReference>
<dbReference type="InterPro" id="IPR024034">
    <property type="entry name" value="ATPase_F1/V1_b/a_C"/>
</dbReference>
<dbReference type="InterPro" id="IPR027417">
    <property type="entry name" value="P-loop_NTPase"/>
</dbReference>
<dbReference type="InterPro" id="IPR022878">
    <property type="entry name" value="V-ATPase_asu"/>
</dbReference>
<dbReference type="NCBIfam" id="NF003220">
    <property type="entry name" value="PRK04192.1"/>
    <property type="match status" value="1"/>
</dbReference>
<dbReference type="PANTHER" id="PTHR43607:SF1">
    <property type="entry name" value="H(+)-TRANSPORTING TWO-SECTOR ATPASE"/>
    <property type="match status" value="1"/>
</dbReference>
<dbReference type="PANTHER" id="PTHR43607">
    <property type="entry name" value="V-TYPE PROTON ATPASE CATALYTIC SUBUNIT A"/>
    <property type="match status" value="1"/>
</dbReference>
<dbReference type="Pfam" id="PF00006">
    <property type="entry name" value="ATP-synt_ab"/>
    <property type="match status" value="1"/>
</dbReference>
<dbReference type="Pfam" id="PF02874">
    <property type="entry name" value="ATP-synt_ab_N"/>
    <property type="match status" value="1"/>
</dbReference>
<dbReference type="Pfam" id="PF16886">
    <property type="entry name" value="ATP-synt_ab_Xtn"/>
    <property type="match status" value="1"/>
</dbReference>
<dbReference type="Pfam" id="PF22919">
    <property type="entry name" value="ATP-synt_VA_C"/>
    <property type="match status" value="1"/>
</dbReference>
<dbReference type="SUPFAM" id="SSF47917">
    <property type="entry name" value="C-terminal domain of alpha and beta subunits of F1 ATP synthase"/>
    <property type="match status" value="1"/>
</dbReference>
<dbReference type="SUPFAM" id="SSF50615">
    <property type="entry name" value="N-terminal domain of alpha and beta subunits of F1 ATP synthase"/>
    <property type="match status" value="1"/>
</dbReference>
<dbReference type="SUPFAM" id="SSF52540">
    <property type="entry name" value="P-loop containing nucleoside triphosphate hydrolases"/>
    <property type="match status" value="1"/>
</dbReference>
<dbReference type="PROSITE" id="PS00152">
    <property type="entry name" value="ATPASE_ALPHA_BETA"/>
    <property type="match status" value="1"/>
</dbReference>
<organism>
    <name type="scientific">Streptococcus pyogenes serotype M49 (strain NZ131)</name>
    <dbReference type="NCBI Taxonomy" id="471876"/>
    <lineage>
        <taxon>Bacteria</taxon>
        <taxon>Bacillati</taxon>
        <taxon>Bacillota</taxon>
        <taxon>Bacilli</taxon>
        <taxon>Lactobacillales</taxon>
        <taxon>Streptococcaceae</taxon>
        <taxon>Streptococcus</taxon>
    </lineage>
</organism>
<accession>B5XJH3</accession>
<gene>
    <name evidence="1" type="primary">atpA</name>
    <name type="ordered locus">Spy49_0135</name>
</gene>
<reference key="1">
    <citation type="journal article" date="2008" name="J. Bacteriol.">
        <title>Genome sequence of a nephritogenic and highly transformable M49 strain of Streptococcus pyogenes.</title>
        <authorList>
            <person name="McShan W.M."/>
            <person name="Ferretti J.J."/>
            <person name="Karasawa T."/>
            <person name="Suvorov A.N."/>
            <person name="Lin S."/>
            <person name="Qin B."/>
            <person name="Jia H."/>
            <person name="Kenton S."/>
            <person name="Najar F."/>
            <person name="Wu H."/>
            <person name="Scott J."/>
            <person name="Roe B.A."/>
            <person name="Savic D.J."/>
        </authorList>
    </citation>
    <scope>NUCLEOTIDE SEQUENCE [LARGE SCALE GENOMIC DNA]</scope>
    <source>
        <strain>NZ131</strain>
    </source>
</reference>
<comment type="function">
    <text evidence="1">Produces ATP from ADP in the presence of a proton gradient across the membrane. The V-type alpha chain is a catalytic subunit.</text>
</comment>
<comment type="catalytic activity">
    <reaction evidence="1">
        <text>ATP + H2O + 4 H(+)(in) = ADP + phosphate + 5 H(+)(out)</text>
        <dbReference type="Rhea" id="RHEA:57720"/>
        <dbReference type="ChEBI" id="CHEBI:15377"/>
        <dbReference type="ChEBI" id="CHEBI:15378"/>
        <dbReference type="ChEBI" id="CHEBI:30616"/>
        <dbReference type="ChEBI" id="CHEBI:43474"/>
        <dbReference type="ChEBI" id="CHEBI:456216"/>
        <dbReference type="EC" id="7.1.2.2"/>
    </reaction>
</comment>
<comment type="similarity">
    <text evidence="1">Belongs to the ATPase alpha/beta chains family.</text>
</comment>